<proteinExistence type="inferred from homology"/>
<evidence type="ECO:0000255" key="1">
    <source>
        <dbReference type="HAMAP-Rule" id="MF_00218"/>
    </source>
</evidence>
<name>DCUP_BURP6</name>
<protein>
    <recommendedName>
        <fullName evidence="1">Uroporphyrinogen decarboxylase</fullName>
        <shortName evidence="1">UPD</shortName>
        <shortName evidence="1">URO-D</shortName>
        <ecNumber evidence="1">4.1.1.37</ecNumber>
    </recommendedName>
</protein>
<dbReference type="EC" id="4.1.1.37" evidence="1"/>
<dbReference type="EMBL" id="CP000570">
    <property type="protein sequence ID" value="ABN82557.1"/>
    <property type="molecule type" value="Genomic_DNA"/>
</dbReference>
<dbReference type="RefSeq" id="WP_004524502.1">
    <property type="nucleotide sequence ID" value="NC_009074.1"/>
</dbReference>
<dbReference type="SMR" id="A3NF35"/>
<dbReference type="KEGG" id="bpd:BURPS668_3963"/>
<dbReference type="HOGENOM" id="CLU_040933_0_0_4"/>
<dbReference type="UniPathway" id="UPA00251">
    <property type="reaction ID" value="UER00321"/>
</dbReference>
<dbReference type="GO" id="GO:0005829">
    <property type="term" value="C:cytosol"/>
    <property type="evidence" value="ECO:0007669"/>
    <property type="project" value="TreeGrafter"/>
</dbReference>
<dbReference type="GO" id="GO:0004853">
    <property type="term" value="F:uroporphyrinogen decarboxylase activity"/>
    <property type="evidence" value="ECO:0007669"/>
    <property type="project" value="UniProtKB-UniRule"/>
</dbReference>
<dbReference type="GO" id="GO:0019353">
    <property type="term" value="P:protoporphyrinogen IX biosynthetic process from glutamate"/>
    <property type="evidence" value="ECO:0007669"/>
    <property type="project" value="TreeGrafter"/>
</dbReference>
<dbReference type="CDD" id="cd00717">
    <property type="entry name" value="URO-D"/>
    <property type="match status" value="1"/>
</dbReference>
<dbReference type="FunFam" id="3.20.20.210:FF:000001">
    <property type="entry name" value="Uroporphyrinogen decarboxylase"/>
    <property type="match status" value="1"/>
</dbReference>
<dbReference type="Gene3D" id="3.20.20.210">
    <property type="match status" value="1"/>
</dbReference>
<dbReference type="HAMAP" id="MF_00218">
    <property type="entry name" value="URO_D"/>
    <property type="match status" value="1"/>
</dbReference>
<dbReference type="InterPro" id="IPR038071">
    <property type="entry name" value="UROD/MetE-like_sf"/>
</dbReference>
<dbReference type="InterPro" id="IPR006361">
    <property type="entry name" value="Uroporphyrinogen_deCO2ase_HemE"/>
</dbReference>
<dbReference type="InterPro" id="IPR000257">
    <property type="entry name" value="Uroporphyrinogen_deCOase"/>
</dbReference>
<dbReference type="NCBIfam" id="TIGR01464">
    <property type="entry name" value="hemE"/>
    <property type="match status" value="1"/>
</dbReference>
<dbReference type="PANTHER" id="PTHR21091">
    <property type="entry name" value="METHYLTETRAHYDROFOLATE:HOMOCYSTEINE METHYLTRANSFERASE RELATED"/>
    <property type="match status" value="1"/>
</dbReference>
<dbReference type="PANTHER" id="PTHR21091:SF169">
    <property type="entry name" value="UROPORPHYRINOGEN DECARBOXYLASE"/>
    <property type="match status" value="1"/>
</dbReference>
<dbReference type="Pfam" id="PF01208">
    <property type="entry name" value="URO-D"/>
    <property type="match status" value="1"/>
</dbReference>
<dbReference type="SUPFAM" id="SSF51726">
    <property type="entry name" value="UROD/MetE-like"/>
    <property type="match status" value="1"/>
</dbReference>
<dbReference type="PROSITE" id="PS00906">
    <property type="entry name" value="UROD_1"/>
    <property type="match status" value="1"/>
</dbReference>
<dbReference type="PROSITE" id="PS00907">
    <property type="entry name" value="UROD_2"/>
    <property type="match status" value="1"/>
</dbReference>
<reference key="1">
    <citation type="journal article" date="2010" name="Genome Biol. Evol.">
        <title>Continuing evolution of Burkholderia mallei through genome reduction and large-scale rearrangements.</title>
        <authorList>
            <person name="Losada L."/>
            <person name="Ronning C.M."/>
            <person name="DeShazer D."/>
            <person name="Woods D."/>
            <person name="Fedorova N."/>
            <person name="Kim H.S."/>
            <person name="Shabalina S.A."/>
            <person name="Pearson T.R."/>
            <person name="Brinkac L."/>
            <person name="Tan P."/>
            <person name="Nandi T."/>
            <person name="Crabtree J."/>
            <person name="Badger J."/>
            <person name="Beckstrom-Sternberg S."/>
            <person name="Saqib M."/>
            <person name="Schutzer S.E."/>
            <person name="Keim P."/>
            <person name="Nierman W.C."/>
        </authorList>
    </citation>
    <scope>NUCLEOTIDE SEQUENCE [LARGE SCALE GENOMIC DNA]</scope>
    <source>
        <strain>668</strain>
    </source>
</reference>
<comment type="function">
    <text evidence="1">Catalyzes the decarboxylation of four acetate groups of uroporphyrinogen-III to yield coproporphyrinogen-III.</text>
</comment>
<comment type="catalytic activity">
    <reaction evidence="1">
        <text>uroporphyrinogen III + 4 H(+) = coproporphyrinogen III + 4 CO2</text>
        <dbReference type="Rhea" id="RHEA:19865"/>
        <dbReference type="ChEBI" id="CHEBI:15378"/>
        <dbReference type="ChEBI" id="CHEBI:16526"/>
        <dbReference type="ChEBI" id="CHEBI:57308"/>
        <dbReference type="ChEBI" id="CHEBI:57309"/>
        <dbReference type="EC" id="4.1.1.37"/>
    </reaction>
</comment>
<comment type="pathway">
    <text evidence="1">Porphyrin-containing compound metabolism; protoporphyrin-IX biosynthesis; coproporphyrinogen-III from 5-aminolevulinate: step 4/4.</text>
</comment>
<comment type="subunit">
    <text evidence="1">Homodimer.</text>
</comment>
<comment type="subcellular location">
    <subcellularLocation>
        <location evidence="1">Cytoplasm</location>
    </subcellularLocation>
</comment>
<comment type="similarity">
    <text evidence="1">Belongs to the uroporphyrinogen decarboxylase family.</text>
</comment>
<sequence>MAQTLLNDTFLRALLREPTDYTPIWLMRQAGRYLPEYNATRARAGSFLGLAKQPDYATEVTLQPLERFPLDAAILFSDILTIPDAMGLGLDFAAGEGPKFAHPVRTEADVAKLAVPDIGATLGYVTDAVREIRRALTDGEGRQRVPLIGFSGSPWTLACYMVEGGGSDDFRTVKSMAYARPDLMHRILDVNAQAVAAYLNAQIEAGAQAVMIFDTWGGALADGAYQRFSLDYVRRVLAQLKREHDGARVPAIAFTKGGGLWLEELAATGVDAVGLDWTVNLGRARERVAGRVALQGNLDPTILFAPPEAIRAEARAVLDSYGNHPGHVFNLGHGISQFTPPEHVAELVDEVHRHSRAIRSGAGS</sequence>
<organism>
    <name type="scientific">Burkholderia pseudomallei (strain 668)</name>
    <dbReference type="NCBI Taxonomy" id="320373"/>
    <lineage>
        <taxon>Bacteria</taxon>
        <taxon>Pseudomonadati</taxon>
        <taxon>Pseudomonadota</taxon>
        <taxon>Betaproteobacteria</taxon>
        <taxon>Burkholderiales</taxon>
        <taxon>Burkholderiaceae</taxon>
        <taxon>Burkholderia</taxon>
        <taxon>pseudomallei group</taxon>
    </lineage>
</organism>
<gene>
    <name evidence="1" type="primary">hemE</name>
    <name type="ordered locus">BURPS668_3963</name>
</gene>
<keyword id="KW-0963">Cytoplasm</keyword>
<keyword id="KW-0210">Decarboxylase</keyword>
<keyword id="KW-0456">Lyase</keyword>
<keyword id="KW-0627">Porphyrin biosynthesis</keyword>
<accession>A3NF35</accession>
<feature type="chain" id="PRO_1000023883" description="Uroporphyrinogen decarboxylase">
    <location>
        <begin position="1"/>
        <end position="364"/>
    </location>
</feature>
<feature type="binding site" evidence="1">
    <location>
        <begin position="28"/>
        <end position="32"/>
    </location>
    <ligand>
        <name>substrate</name>
    </ligand>
</feature>
<feature type="binding site" evidence="1">
    <location>
        <position position="78"/>
    </location>
    <ligand>
        <name>substrate</name>
    </ligand>
</feature>
<feature type="binding site" evidence="1">
    <location>
        <position position="160"/>
    </location>
    <ligand>
        <name>substrate</name>
    </ligand>
</feature>
<feature type="binding site" evidence="1">
    <location>
        <position position="215"/>
    </location>
    <ligand>
        <name>substrate</name>
    </ligand>
</feature>
<feature type="binding site" evidence="1">
    <location>
        <position position="333"/>
    </location>
    <ligand>
        <name>substrate</name>
    </ligand>
</feature>
<feature type="site" description="Transition state stabilizer" evidence="1">
    <location>
        <position position="78"/>
    </location>
</feature>